<accession>P83006</accession>
<accession>Q80Z89</accession>
<proteinExistence type="evidence at protein level"/>
<gene>
    <name evidence="8" type="primary">Pafah2</name>
</gene>
<evidence type="ECO:0000250" key="1">
    <source>
        <dbReference type="UniProtKB" id="P79106"/>
    </source>
</evidence>
<evidence type="ECO:0000250" key="2">
    <source>
        <dbReference type="UniProtKB" id="Q99487"/>
    </source>
</evidence>
<evidence type="ECO:0000255" key="3">
    <source>
        <dbReference type="PROSITE-ProRule" id="PRU10037"/>
    </source>
</evidence>
<evidence type="ECO:0000269" key="4">
    <source>
    </source>
</evidence>
<evidence type="ECO:0000303" key="5">
    <source>
    </source>
</evidence>
<evidence type="ECO:0000305" key="6"/>
<evidence type="ECO:0000305" key="7">
    <source>
    </source>
</evidence>
<evidence type="ECO:0000312" key="8">
    <source>
        <dbReference type="RGD" id="631399"/>
    </source>
</evidence>
<organism evidence="6">
    <name type="scientific">Rattus norvegicus</name>
    <name type="common">Rat</name>
    <dbReference type="NCBI Taxonomy" id="10116"/>
    <lineage>
        <taxon>Eukaryota</taxon>
        <taxon>Metazoa</taxon>
        <taxon>Chordata</taxon>
        <taxon>Craniata</taxon>
        <taxon>Vertebrata</taxon>
        <taxon>Euteleostomi</taxon>
        <taxon>Mammalia</taxon>
        <taxon>Eutheria</taxon>
        <taxon>Euarchontoglires</taxon>
        <taxon>Glires</taxon>
        <taxon>Rodentia</taxon>
        <taxon>Myomorpha</taxon>
        <taxon>Muroidea</taxon>
        <taxon>Muridae</taxon>
        <taxon>Murinae</taxon>
        <taxon>Rattus</taxon>
    </lineage>
</organism>
<dbReference type="EC" id="3.1.1.47" evidence="4"/>
<dbReference type="EC" id="2.3.1.149" evidence="4"/>
<dbReference type="EMBL" id="AY225592">
    <property type="protein sequence ID" value="AAO62314.1"/>
    <property type="molecule type" value="mRNA"/>
</dbReference>
<dbReference type="RefSeq" id="NP_808793.1">
    <property type="nucleotide sequence ID" value="NM_177932.2"/>
</dbReference>
<dbReference type="RefSeq" id="XP_006239189.1">
    <property type="nucleotide sequence ID" value="XM_006239127.5"/>
</dbReference>
<dbReference type="RefSeq" id="XP_017448893.1">
    <property type="nucleotide sequence ID" value="XM_017593404.3"/>
</dbReference>
<dbReference type="RefSeq" id="XP_038965969.1">
    <property type="nucleotide sequence ID" value="XM_039110041.2"/>
</dbReference>
<dbReference type="SMR" id="P83006"/>
<dbReference type="FunCoup" id="P83006">
    <property type="interactions" value="462"/>
</dbReference>
<dbReference type="STRING" id="10116.ENSRNOP00000034439"/>
<dbReference type="SwissLipids" id="SLP:000000697"/>
<dbReference type="ESTHER" id="ratno-paf2">
    <property type="family name" value="PAF-Acetylhydrolase"/>
</dbReference>
<dbReference type="iPTMnet" id="P83006"/>
<dbReference type="PhosphoSitePlus" id="P83006"/>
<dbReference type="jPOST" id="P83006"/>
<dbReference type="PaxDb" id="10116-ENSRNOP00000034439"/>
<dbReference type="GeneID" id="313611"/>
<dbReference type="KEGG" id="rno:313611"/>
<dbReference type="UCSC" id="RGD:631399">
    <property type="organism name" value="rat"/>
</dbReference>
<dbReference type="AGR" id="RGD:631399"/>
<dbReference type="CTD" id="5051"/>
<dbReference type="RGD" id="631399">
    <property type="gene designation" value="Pafah2"/>
</dbReference>
<dbReference type="eggNOG" id="KOG3847">
    <property type="taxonomic scope" value="Eukaryota"/>
</dbReference>
<dbReference type="HOGENOM" id="CLU_022501_0_0_1"/>
<dbReference type="InParanoid" id="P83006"/>
<dbReference type="OrthoDB" id="15950at9989"/>
<dbReference type="PhylomeDB" id="P83006"/>
<dbReference type="TreeFam" id="TF313831"/>
<dbReference type="BRENDA" id="3.1.1.47">
    <property type="organism ID" value="5301"/>
</dbReference>
<dbReference type="Reactome" id="R-RNO-418346">
    <property type="pathway name" value="Platelet homeostasis"/>
</dbReference>
<dbReference type="PRO" id="PR:P83006"/>
<dbReference type="Proteomes" id="UP000002494">
    <property type="component" value="Chromosome 5"/>
</dbReference>
<dbReference type="Bgee" id="ENSRNOG00000022288">
    <property type="expression patterns" value="Expressed in lung and 18 other cell types or tissues"/>
</dbReference>
<dbReference type="ExpressionAtlas" id="P83006">
    <property type="expression patterns" value="baseline and differential"/>
</dbReference>
<dbReference type="GO" id="GO:0005737">
    <property type="term" value="C:cytoplasm"/>
    <property type="evidence" value="ECO:0000250"/>
    <property type="project" value="UniProtKB"/>
</dbReference>
<dbReference type="GO" id="GO:0005789">
    <property type="term" value="C:endoplasmic reticulum membrane"/>
    <property type="evidence" value="ECO:0007669"/>
    <property type="project" value="UniProtKB-SubCell"/>
</dbReference>
<dbReference type="GO" id="GO:0031966">
    <property type="term" value="C:mitochondrial membrane"/>
    <property type="evidence" value="ECO:0007669"/>
    <property type="project" value="UniProtKB-SubCell"/>
</dbReference>
<dbReference type="GO" id="GO:0003847">
    <property type="term" value="F:1-alkyl-2-acetylglycerophosphocholine esterase activity"/>
    <property type="evidence" value="ECO:0000314"/>
    <property type="project" value="UniProtKB"/>
</dbReference>
<dbReference type="GO" id="GO:0047179">
    <property type="term" value="F:platelet-activating factor acetyltransferase activity"/>
    <property type="evidence" value="ECO:0000314"/>
    <property type="project" value="UniProtKB"/>
</dbReference>
<dbReference type="GO" id="GO:0016042">
    <property type="term" value="P:lipid catabolic process"/>
    <property type="evidence" value="ECO:0007669"/>
    <property type="project" value="UniProtKB-KW"/>
</dbReference>
<dbReference type="GO" id="GO:0043066">
    <property type="term" value="P:negative regulation of apoptotic process"/>
    <property type="evidence" value="ECO:0000315"/>
    <property type="project" value="RGD"/>
</dbReference>
<dbReference type="FunFam" id="3.40.50.1820:FF:000062">
    <property type="entry name" value="Platelet-activating factor acetylhydrolase"/>
    <property type="match status" value="1"/>
</dbReference>
<dbReference type="Gene3D" id="3.40.50.1820">
    <property type="entry name" value="alpha/beta hydrolase"/>
    <property type="match status" value="1"/>
</dbReference>
<dbReference type="InterPro" id="IPR029058">
    <property type="entry name" value="AB_hydrolase_fold"/>
</dbReference>
<dbReference type="InterPro" id="IPR016715">
    <property type="entry name" value="PAF_acetylhydro_eukaryote"/>
</dbReference>
<dbReference type="PANTHER" id="PTHR10272">
    <property type="entry name" value="PLATELET-ACTIVATING FACTOR ACETYLHYDROLASE"/>
    <property type="match status" value="1"/>
</dbReference>
<dbReference type="PANTHER" id="PTHR10272:SF6">
    <property type="entry name" value="PLATELET-ACTIVATING FACTOR ACETYLHYDROLASE 2, CYTOPLASMIC"/>
    <property type="match status" value="1"/>
</dbReference>
<dbReference type="Pfam" id="PF03403">
    <property type="entry name" value="PAF-AH_p_II"/>
    <property type="match status" value="1"/>
</dbReference>
<dbReference type="PIRSF" id="PIRSF018169">
    <property type="entry name" value="PAF_acetylhydrolase"/>
    <property type="match status" value="1"/>
</dbReference>
<dbReference type="SUPFAM" id="SSF53474">
    <property type="entry name" value="alpha/beta-Hydrolases"/>
    <property type="match status" value="1"/>
</dbReference>
<dbReference type="PROSITE" id="PS00120">
    <property type="entry name" value="LIPASE_SER"/>
    <property type="match status" value="1"/>
</dbReference>
<sequence>MGAGQSICFPPISGPHHIGCTDVMEGHSLEGSLFRLFYPCEASETCEQPLWIPRYEYCVGLADYLQYNKRWVGLLFNVGIGSCRLPVSWNGPFKTKESGYPLIILSHGLGGFRVSYSAFCMELASRGFVVAAIEHRDQSAAATYFCKQTSQESSPTESLEEEWIPFRRIKEGEKEFHVRNPQVHQRAKECVRVLQILQDASAGKPVINVFPGGLDLMTLKGSIDMSRVAVMGHSFGGATAILALTQEAQFRCAIALDAWMFPLEHDFYPKARGPVFFINVEKFQTVESVNLMKKICAQHEQSRIVTVLGAVHRSQTDFAFVTGNMIGKLFSSGTRGTLDPYEGQEVMVRAMLAFLQKHLDLKEDYDQWNSFIEGIGPSLIQGAPHYLSSL</sequence>
<feature type="initiator methionine" description="Removed">
    <location>
        <position position="1"/>
    </location>
</feature>
<feature type="chain" id="PRO_0000090385" description="Platelet-activating factor acetylhydrolase 2, cytoplasmic">
    <location>
        <begin position="2"/>
        <end position="390"/>
    </location>
</feature>
<feature type="active site" description="Nucleophile" evidence="1">
    <location>
        <position position="234"/>
    </location>
</feature>
<feature type="active site" description="Charge relay system" evidence="3">
    <location>
        <position position="257"/>
    </location>
</feature>
<feature type="active site" description="Charge relay system" evidence="3">
    <location>
        <position position="312"/>
    </location>
</feature>
<feature type="lipid moiety-binding region" description="N-myristoyl glycine" evidence="1">
    <location>
        <position position="2"/>
    </location>
</feature>
<feature type="sequence conflict" description="In Ref. 2; AA sequence." evidence="6" ref="2">
    <original>R</original>
    <variation>L</variation>
    <location>
        <position position="84"/>
    </location>
</feature>
<feature type="sequence conflict" description="In Ref. 2; AA sequence." evidence="6" ref="2">
    <original>T</original>
    <variation>K</variation>
    <location>
        <position position="95"/>
    </location>
</feature>
<reference key="1">
    <citation type="submission" date="2003-01" db="EMBL/GenBank/DDBJ databases">
        <title>Kinetics of platelet-activating factor binding, internalization, degradation, and apoptotic signaling in neural precursors.</title>
        <authorList>
            <person name="Bonin F."/>
            <person name="Moffat T.C."/>
            <person name="Renaud N."/>
            <person name="Franks D.J."/>
            <person name="Bennett S.A.L."/>
        </authorList>
    </citation>
    <scope>NUCLEOTIDE SEQUENCE [MRNA]</scope>
    <source>
        <strain>Wistar</strain>
        <tissue>Brain</tissue>
    </source>
</reference>
<reference evidence="6" key="2">
    <citation type="journal article" date="1999" name="J. Biol. Chem.">
        <title>Purification and characterization from rat kidney membranes of a novel platelet-activating factor (PAF)-dependent transacetylase that catalyzes the hydrolysis of PAF, formation of PAF analogs, and C2-ceramide.</title>
        <authorList>
            <person name="Karasawa K."/>
            <person name="Qiu X."/>
            <person name="Lee T.-C."/>
        </authorList>
    </citation>
    <scope>PROTEIN SEQUENCE OF 84-96; 169-179 AND 329-357</scope>
    <scope>FUNCTION</scope>
    <scope>CATALYTIC ACTIVITY</scope>
    <scope>SUBUNIT</scope>
    <scope>SUBCELLULAR LOCATION</scope>
    <scope>TISSUE SPECIFICITY</scope>
    <scope>BIOPHYSICOCHEMICAL PROPERTIES</scope>
    <source>
        <strain>Sprague-Dawley</strain>
        <tissue>Kidney</tissue>
    </source>
</reference>
<protein>
    <recommendedName>
        <fullName evidence="5">Platelet-activating factor acetylhydrolase 2, cytoplasmic</fullName>
        <ecNumber evidence="4">3.1.1.47</ecNumber>
    </recommendedName>
    <alternativeName>
        <fullName evidence="5">PAF:lysophospholipid transacetylase</fullName>
    </alternativeName>
    <alternativeName>
        <fullName evidence="5">PAF:sphingosine transacetylase</fullName>
    </alternativeName>
    <alternativeName>
        <fullName evidence="6">Platelet-activating factor acetyltransferase PAFAH2</fullName>
        <ecNumber evidence="4">2.3.1.149</ecNumber>
    </alternativeName>
    <alternativeName>
        <fullName evidence="2">Serine-dependent phospholipase A2</fullName>
        <shortName evidence="6">SD-PLA2</shortName>
    </alternativeName>
</protein>
<keyword id="KW-0963">Cytoplasm</keyword>
<keyword id="KW-0903">Direct protein sequencing</keyword>
<keyword id="KW-0256">Endoplasmic reticulum</keyword>
<keyword id="KW-0378">Hydrolase</keyword>
<keyword id="KW-0442">Lipid degradation</keyword>
<keyword id="KW-0443">Lipid metabolism</keyword>
<keyword id="KW-0449">Lipoprotein</keyword>
<keyword id="KW-0472">Membrane</keyword>
<keyword id="KW-0492">Microsome</keyword>
<keyword id="KW-0496">Mitochondrion</keyword>
<keyword id="KW-0519">Myristate</keyword>
<keyword id="KW-1185">Reference proteome</keyword>
<keyword id="KW-0808">Transferase</keyword>
<name>PAFA2_RAT</name>
<comment type="function">
    <text evidence="1 4">Catalyzes the hydrolyze of the acetyl group at the sn-2 position of platelet-activating factor (PAF) and its analogs, leading to their inactivation (PubMed:10085103). Hydrolyzes propionyl and butyroyl moieties approximately half as effectively as PAF (By similarity). Also catalyzes transacetylation of the acetyl group from platelet-activating factor (PAF) to lysoplasmalogen and to sphingosine, producing plasmalogen analogs of PAF and N-acetylsphingosine (C2-ceramide) respectively (PubMed:10085103). Has a marked selectivity for phospholipids with short acyl chains at the sn-2 position (PubMed:10085103).</text>
</comment>
<comment type="catalytic activity">
    <reaction evidence="4">
        <text>a 1-O-alkyl-2-acetyl-sn-glycero-3-phosphocholine + H2O = a 1-O-alkyl-sn-glycero-3-phosphocholine + acetate + H(+)</text>
        <dbReference type="Rhea" id="RHEA:17777"/>
        <dbReference type="ChEBI" id="CHEBI:15377"/>
        <dbReference type="ChEBI" id="CHEBI:15378"/>
        <dbReference type="ChEBI" id="CHEBI:30089"/>
        <dbReference type="ChEBI" id="CHEBI:30909"/>
        <dbReference type="ChEBI" id="CHEBI:36707"/>
        <dbReference type="EC" id="3.1.1.47"/>
    </reaction>
    <physiologicalReaction direction="left-to-right" evidence="7">
        <dbReference type="Rhea" id="RHEA:17778"/>
    </physiologicalReaction>
</comment>
<comment type="catalytic activity">
    <reaction evidence="1">
        <text>a 1-O-alkyl-2-acyl-sn-glycero-3-phosphocholine + H2O = a 1-O-alkyl-sn-glycero-3-phosphocholine + a fatty acid + H(+)</text>
        <dbReference type="Rhea" id="RHEA:36231"/>
        <dbReference type="ChEBI" id="CHEBI:15377"/>
        <dbReference type="ChEBI" id="CHEBI:15378"/>
        <dbReference type="ChEBI" id="CHEBI:28868"/>
        <dbReference type="ChEBI" id="CHEBI:30909"/>
        <dbReference type="ChEBI" id="CHEBI:36702"/>
    </reaction>
    <physiologicalReaction direction="left-to-right" evidence="1">
        <dbReference type="Rhea" id="RHEA:36232"/>
    </physiologicalReaction>
</comment>
<comment type="catalytic activity">
    <reaction evidence="4">
        <text>1-O-hexadecyl-2-acetyl-sn-glycero-3-phosphocholine + H2O = 1-O-hexadecyl-sn-glycero-3-phosphocholine + acetate + H(+)</text>
        <dbReference type="Rhea" id="RHEA:40479"/>
        <dbReference type="ChEBI" id="CHEBI:15377"/>
        <dbReference type="ChEBI" id="CHEBI:15378"/>
        <dbReference type="ChEBI" id="CHEBI:30089"/>
        <dbReference type="ChEBI" id="CHEBI:44811"/>
        <dbReference type="ChEBI" id="CHEBI:64496"/>
    </reaction>
    <physiologicalReaction direction="left-to-right" evidence="7">
        <dbReference type="Rhea" id="RHEA:40480"/>
    </physiologicalReaction>
</comment>
<comment type="catalytic activity">
    <reaction evidence="4">
        <text>1-O-hexadecyl-2-acetyl-sn-glycero-3-phosphocholine + a 1-O-(1Z-alkenyl)-sn-glycero-3-phosphoethanolamine = 1-O-(1Z-alkenyl)-2-acetyl-sn-glycero-3-phosphoethanolamine + 1-O-hexadecyl-sn-glycero-3-phosphocholine</text>
        <dbReference type="Rhea" id="RHEA:41396"/>
        <dbReference type="ChEBI" id="CHEBI:44811"/>
        <dbReference type="ChEBI" id="CHEBI:64496"/>
        <dbReference type="ChEBI" id="CHEBI:77288"/>
        <dbReference type="ChEBI" id="CHEBI:78419"/>
    </reaction>
    <physiologicalReaction direction="left-to-right" evidence="7">
        <dbReference type="Rhea" id="RHEA:41397"/>
    </physiologicalReaction>
</comment>
<comment type="catalytic activity">
    <reaction evidence="4">
        <text>1-O-hexadecyl-2-acetyl-sn-glycero-3-phosphocholine + sphing-4-enine = 1-O-hexadecyl-sn-glycero-3-phosphocholine + N-(acetyl)-sphing-4-enine + H(+)</text>
        <dbReference type="Rhea" id="RHEA:41408"/>
        <dbReference type="ChEBI" id="CHEBI:15378"/>
        <dbReference type="ChEBI" id="CHEBI:44811"/>
        <dbReference type="ChEBI" id="CHEBI:46979"/>
        <dbReference type="ChEBI" id="CHEBI:57756"/>
        <dbReference type="ChEBI" id="CHEBI:64496"/>
    </reaction>
    <physiologicalReaction direction="left-to-right" evidence="7">
        <dbReference type="Rhea" id="RHEA:41409"/>
    </physiologicalReaction>
</comment>
<comment type="catalytic activity">
    <reaction evidence="4">
        <text>a 1-organyl-2-lyso-sn-glycero-3-phospholipid + a 1-O-alkyl-2-acetyl-sn-glycero-3-phosphocholine = a 1-organyl-2-acetyl-sn-glycero-3-phospholipid + a 1-O-alkyl-sn-glycero-3-phosphocholine</text>
        <dbReference type="Rhea" id="RHEA:11048"/>
        <dbReference type="ChEBI" id="CHEBI:685"/>
        <dbReference type="ChEBI" id="CHEBI:30909"/>
        <dbReference type="ChEBI" id="CHEBI:36707"/>
        <dbReference type="ChEBI" id="CHEBI:76590"/>
        <dbReference type="EC" id="2.3.1.149"/>
    </reaction>
    <physiologicalReaction direction="left-to-right" evidence="7">
        <dbReference type="Rhea" id="RHEA:11049"/>
    </physiologicalReaction>
</comment>
<comment type="catalytic activity">
    <reaction evidence="1">
        <text>1-O-hexadecyl-2-glutaryl-sn-glycero-3-phosphocholine + H2O = 1-O-hexadecyl-sn-glycero-3-phosphocholine + glutarate + H(+)</text>
        <dbReference type="Rhea" id="RHEA:41700"/>
        <dbReference type="ChEBI" id="CHEBI:15377"/>
        <dbReference type="ChEBI" id="CHEBI:15378"/>
        <dbReference type="ChEBI" id="CHEBI:30921"/>
        <dbReference type="ChEBI" id="CHEBI:64496"/>
        <dbReference type="ChEBI" id="CHEBI:78371"/>
    </reaction>
    <physiologicalReaction direction="left-to-right" evidence="1">
        <dbReference type="Rhea" id="RHEA:41701"/>
    </physiologicalReaction>
</comment>
<comment type="catalytic activity">
    <reaction evidence="1">
        <text>1-O-hexadecyl-2-succinyl-sn-glycero-3-phosphocholine + H2O = 1-O-hexadecyl-sn-glycero-3-phosphocholine + succinate + H(+)</text>
        <dbReference type="Rhea" id="RHEA:41696"/>
        <dbReference type="ChEBI" id="CHEBI:15377"/>
        <dbReference type="ChEBI" id="CHEBI:15378"/>
        <dbReference type="ChEBI" id="CHEBI:30031"/>
        <dbReference type="ChEBI" id="CHEBI:64496"/>
        <dbReference type="ChEBI" id="CHEBI:78369"/>
    </reaction>
    <physiologicalReaction direction="left-to-right" evidence="1">
        <dbReference type="Rhea" id="RHEA:41697"/>
    </physiologicalReaction>
</comment>
<comment type="catalytic activity">
    <reaction evidence="1">
        <text>1-O-hexadecyl-2-butanoyl-sn-glycero-3-phosphocholine + H2O = 1-O-hexadecyl-sn-glycero-3-phosphocholine + butanoate + H(+)</text>
        <dbReference type="Rhea" id="RHEA:41692"/>
        <dbReference type="ChEBI" id="CHEBI:15377"/>
        <dbReference type="ChEBI" id="CHEBI:15378"/>
        <dbReference type="ChEBI" id="CHEBI:17968"/>
        <dbReference type="ChEBI" id="CHEBI:64496"/>
        <dbReference type="ChEBI" id="CHEBI:78368"/>
    </reaction>
    <physiologicalReaction direction="left-to-right" evidence="1">
        <dbReference type="Rhea" id="RHEA:41693"/>
    </physiologicalReaction>
</comment>
<comment type="catalytic activity">
    <reaction evidence="1">
        <text>1-O-hexadecyl-2-propanoyl-sn-glycero-3-phosphocholine + H2O = 1-O-hexadecyl-sn-glycero-3-phosphocholine + propanoate + H(+)</text>
        <dbReference type="Rhea" id="RHEA:41688"/>
        <dbReference type="ChEBI" id="CHEBI:15377"/>
        <dbReference type="ChEBI" id="CHEBI:15378"/>
        <dbReference type="ChEBI" id="CHEBI:17272"/>
        <dbReference type="ChEBI" id="CHEBI:64496"/>
        <dbReference type="ChEBI" id="CHEBI:78367"/>
    </reaction>
    <physiologicalReaction direction="left-to-right" evidence="1">
        <dbReference type="Rhea" id="RHEA:41689"/>
    </physiologicalReaction>
</comment>
<comment type="biophysicochemical properties">
    <kinetics>
        <KM evidence="4">227 uM for 1-O-(1Z-alkenyl)-sn-glycero-3-phosphoethanolamine</KM>
        <KM evidence="4">4.1 uM for sphing-4-enine</KM>
        <Vmax evidence="4">81.0 umol/min/mg enzyme toward 1-O-(1Z-alkenyl)-sn-glycero-3-phosphoethanolamine</Vmax>
    </kinetics>
</comment>
<comment type="subunit">
    <text evidence="4">Monomer.</text>
</comment>
<comment type="subcellular location">
    <subcellularLocation>
        <location evidence="4">Microsome membrane</location>
        <topology evidence="1">Lipid-anchor</topology>
    </subcellularLocation>
    <subcellularLocation>
        <location evidence="4">Mitochondrion membrane</location>
        <topology evidence="1">Lipid-anchor</topology>
    </subcellularLocation>
    <subcellularLocation>
        <location evidence="1">Cytoplasm</location>
    </subcellularLocation>
    <subcellularLocation>
        <location evidence="7">Endoplasmic reticulum membrane</location>
        <topology evidence="1">Lipid-anchor</topology>
    </subcellularLocation>
    <text evidence="1">In resting cells, localizes to intracellular membranes and cytoplasm. Translocates from the cytoplasm to intracellular membranes upon oxidative stress.</text>
</comment>
<comment type="tissue specificity">
    <text evidence="4">Expressed in kidney.</text>
</comment>
<comment type="similarity">
    <text evidence="6">Belongs to the serine esterase family.</text>
</comment>